<feature type="chain" id="PRO_1000045277" description="Probable transcriptional regulatory protein BBta_6910">
    <location>
        <begin position="1"/>
        <end position="248"/>
    </location>
</feature>
<protein>
    <recommendedName>
        <fullName evidence="1">Probable transcriptional regulatory protein BBta_6910</fullName>
    </recommendedName>
</protein>
<comment type="subcellular location">
    <subcellularLocation>
        <location evidence="1">Cytoplasm</location>
    </subcellularLocation>
</comment>
<comment type="similarity">
    <text evidence="1">Belongs to the TACO1 family.</text>
</comment>
<reference key="1">
    <citation type="journal article" date="2007" name="Science">
        <title>Legumes symbioses: absence of nod genes in photosynthetic bradyrhizobia.</title>
        <authorList>
            <person name="Giraud E."/>
            <person name="Moulin L."/>
            <person name="Vallenet D."/>
            <person name="Barbe V."/>
            <person name="Cytryn E."/>
            <person name="Avarre J.-C."/>
            <person name="Jaubert M."/>
            <person name="Simon D."/>
            <person name="Cartieaux F."/>
            <person name="Prin Y."/>
            <person name="Bena G."/>
            <person name="Hannibal L."/>
            <person name="Fardoux J."/>
            <person name="Kojadinovic M."/>
            <person name="Vuillet L."/>
            <person name="Lajus A."/>
            <person name="Cruveiller S."/>
            <person name="Rouy Z."/>
            <person name="Mangenot S."/>
            <person name="Segurens B."/>
            <person name="Dossat C."/>
            <person name="Franck W.L."/>
            <person name="Chang W.-S."/>
            <person name="Saunders E."/>
            <person name="Bruce D."/>
            <person name="Richardson P."/>
            <person name="Normand P."/>
            <person name="Dreyfus B."/>
            <person name="Pignol D."/>
            <person name="Stacey G."/>
            <person name="Emerich D."/>
            <person name="Vermeglio A."/>
            <person name="Medigue C."/>
            <person name="Sadowsky M."/>
        </authorList>
    </citation>
    <scope>NUCLEOTIDE SEQUENCE [LARGE SCALE GENOMIC DNA]</scope>
    <source>
        <strain>BTAi1 / ATCC BAA-1182</strain>
    </source>
</reference>
<proteinExistence type="inferred from homology"/>
<accession>A5ERK3</accession>
<dbReference type="EMBL" id="CP000494">
    <property type="protein sequence ID" value="ABQ38797.1"/>
    <property type="molecule type" value="Genomic_DNA"/>
</dbReference>
<dbReference type="RefSeq" id="WP_012046731.1">
    <property type="nucleotide sequence ID" value="NC_009485.1"/>
</dbReference>
<dbReference type="SMR" id="A5ERK3"/>
<dbReference type="STRING" id="288000.BBta_6910"/>
<dbReference type="KEGG" id="bbt:BBta_6910"/>
<dbReference type="eggNOG" id="COG0217">
    <property type="taxonomic scope" value="Bacteria"/>
</dbReference>
<dbReference type="HOGENOM" id="CLU_062974_2_2_5"/>
<dbReference type="OrthoDB" id="9781053at2"/>
<dbReference type="Proteomes" id="UP000000246">
    <property type="component" value="Chromosome"/>
</dbReference>
<dbReference type="GO" id="GO:0005829">
    <property type="term" value="C:cytosol"/>
    <property type="evidence" value="ECO:0007669"/>
    <property type="project" value="TreeGrafter"/>
</dbReference>
<dbReference type="GO" id="GO:0003677">
    <property type="term" value="F:DNA binding"/>
    <property type="evidence" value="ECO:0007669"/>
    <property type="project" value="UniProtKB-UniRule"/>
</dbReference>
<dbReference type="GO" id="GO:0006355">
    <property type="term" value="P:regulation of DNA-templated transcription"/>
    <property type="evidence" value="ECO:0007669"/>
    <property type="project" value="UniProtKB-UniRule"/>
</dbReference>
<dbReference type="FunFam" id="1.10.10.200:FF:000002">
    <property type="entry name" value="Probable transcriptional regulatory protein CLM62_37755"/>
    <property type="match status" value="1"/>
</dbReference>
<dbReference type="Gene3D" id="1.10.10.200">
    <property type="match status" value="1"/>
</dbReference>
<dbReference type="Gene3D" id="3.30.70.980">
    <property type="match status" value="2"/>
</dbReference>
<dbReference type="HAMAP" id="MF_00693">
    <property type="entry name" value="Transcrip_reg_TACO1"/>
    <property type="match status" value="1"/>
</dbReference>
<dbReference type="InterPro" id="IPR017856">
    <property type="entry name" value="Integrase-like_N"/>
</dbReference>
<dbReference type="InterPro" id="IPR048300">
    <property type="entry name" value="TACO1_YebC-like_2nd/3rd_dom"/>
</dbReference>
<dbReference type="InterPro" id="IPR049083">
    <property type="entry name" value="TACO1_YebC_N"/>
</dbReference>
<dbReference type="InterPro" id="IPR002876">
    <property type="entry name" value="Transcrip_reg_TACO1-like"/>
</dbReference>
<dbReference type="InterPro" id="IPR026564">
    <property type="entry name" value="Transcrip_reg_TACO1-like_dom3"/>
</dbReference>
<dbReference type="InterPro" id="IPR029072">
    <property type="entry name" value="YebC-like"/>
</dbReference>
<dbReference type="NCBIfam" id="NF001030">
    <property type="entry name" value="PRK00110.1"/>
    <property type="match status" value="1"/>
</dbReference>
<dbReference type="NCBIfam" id="NF009044">
    <property type="entry name" value="PRK12378.1"/>
    <property type="match status" value="1"/>
</dbReference>
<dbReference type="NCBIfam" id="TIGR01033">
    <property type="entry name" value="YebC/PmpR family DNA-binding transcriptional regulator"/>
    <property type="match status" value="1"/>
</dbReference>
<dbReference type="PANTHER" id="PTHR12532:SF6">
    <property type="entry name" value="TRANSCRIPTIONAL REGULATORY PROTEIN YEBC-RELATED"/>
    <property type="match status" value="1"/>
</dbReference>
<dbReference type="PANTHER" id="PTHR12532">
    <property type="entry name" value="TRANSLATIONAL ACTIVATOR OF CYTOCHROME C OXIDASE 1"/>
    <property type="match status" value="1"/>
</dbReference>
<dbReference type="Pfam" id="PF20772">
    <property type="entry name" value="TACO1_YebC_N"/>
    <property type="match status" value="1"/>
</dbReference>
<dbReference type="Pfam" id="PF01709">
    <property type="entry name" value="Transcrip_reg"/>
    <property type="match status" value="1"/>
</dbReference>
<dbReference type="SUPFAM" id="SSF75625">
    <property type="entry name" value="YebC-like"/>
    <property type="match status" value="1"/>
</dbReference>
<name>Y6910_BRASB</name>
<gene>
    <name type="ordered locus">BBta_6910</name>
</gene>
<organism>
    <name type="scientific">Bradyrhizobium sp. (strain BTAi1 / ATCC BAA-1182)</name>
    <dbReference type="NCBI Taxonomy" id="288000"/>
    <lineage>
        <taxon>Bacteria</taxon>
        <taxon>Pseudomonadati</taxon>
        <taxon>Pseudomonadota</taxon>
        <taxon>Alphaproteobacteria</taxon>
        <taxon>Hyphomicrobiales</taxon>
        <taxon>Nitrobacteraceae</taxon>
        <taxon>Bradyrhizobium</taxon>
    </lineage>
</organism>
<keyword id="KW-0963">Cytoplasm</keyword>
<keyword id="KW-0238">DNA-binding</keyword>
<keyword id="KW-1185">Reference proteome</keyword>
<keyword id="KW-0804">Transcription</keyword>
<keyword id="KW-0805">Transcription regulation</keyword>
<sequence length="248" mass="26807">MAGHSQFKNIMHRKGRQDAMKSKLFGKLAREITVAAKLGTPDPAMNPRLRAAVVAARAENMPKDNIERAIKKALGGEGENYAEIRYEGYGPGGVAVIVEALTDNRNRAASDIRSYFTKSGGNLGETGSVSFMFDRVGIIEFDRSVASDDAVLDAAIEAGADDVISGEGGHEVYASPDSFHEVAKNLEAKFGEPRKAALTWKPQNTVSVDDETGEKLLKLMDLLNEHDDVQNVYANFEISDALMAKMGG</sequence>
<evidence type="ECO:0000255" key="1">
    <source>
        <dbReference type="HAMAP-Rule" id="MF_00693"/>
    </source>
</evidence>